<gene>
    <name type="primary">B3GALNT1</name>
    <name type="synonym">B3GALT3</name>
</gene>
<evidence type="ECO:0000250" key="1">
    <source>
        <dbReference type="UniProtKB" id="O75752"/>
    </source>
</evidence>
<evidence type="ECO:0000250" key="2">
    <source>
        <dbReference type="UniProtKB" id="Q920V1"/>
    </source>
</evidence>
<evidence type="ECO:0000255" key="3"/>
<evidence type="ECO:0000305" key="4"/>
<protein>
    <recommendedName>
        <fullName>UDP-GalNAc:beta-1,3-N-acetylgalactosaminyltransferase 1</fullName>
        <shortName>Beta-1,3-GalNAc-T1</shortName>
        <ecNumber evidence="1">2.4.1.79</ecNumber>
    </recommendedName>
    <alternativeName>
        <fullName>Beta-1,3-galactosyltransferase 3</fullName>
        <shortName>Beta-1,3-GalTase 3</shortName>
        <shortName>Beta3Gal-T3</shortName>
        <shortName>Beta3GalT3</shortName>
        <shortName>b3Gal-T3</shortName>
    </alternativeName>
    <alternativeName>
        <fullName>Beta-3-Gx-T3</fullName>
    </alternativeName>
    <alternativeName>
        <fullName>Galactosylgalactosylglucosylceramide beta-D-acetyl-galactosaminyltransferase</fullName>
    </alternativeName>
    <alternativeName>
        <fullName>Globoside synthase</fullName>
    </alternativeName>
    <alternativeName>
        <fullName>UDP-N-acetylgalactosamine:globotriaosylceramide beta-1,3-N-acetylgalactosaminyltransferase</fullName>
    </alternativeName>
</protein>
<keyword id="KW-0325">Glycoprotein</keyword>
<keyword id="KW-0328">Glycosyltransferase</keyword>
<keyword id="KW-0333">Golgi apparatus</keyword>
<keyword id="KW-0443">Lipid metabolism</keyword>
<keyword id="KW-0460">Magnesium</keyword>
<keyword id="KW-0472">Membrane</keyword>
<keyword id="KW-1185">Reference proteome</keyword>
<keyword id="KW-0735">Signal-anchor</keyword>
<keyword id="KW-0808">Transferase</keyword>
<keyword id="KW-0812">Transmembrane</keyword>
<keyword id="KW-1133">Transmembrane helix</keyword>
<name>B3GL1_PIG</name>
<proteinExistence type="evidence at transcript level"/>
<feature type="chain" id="PRO_0000219156" description="UDP-GalNAc:beta-1,3-N-acetylgalactosaminyltransferase 1">
    <location>
        <begin position="1"/>
        <end position="331"/>
    </location>
</feature>
<feature type="topological domain" description="Cytoplasmic" evidence="3">
    <location>
        <begin position="1"/>
        <end position="20"/>
    </location>
</feature>
<feature type="transmembrane region" description="Helical; Signal-anchor for type II membrane protein" evidence="3">
    <location>
        <begin position="21"/>
        <end position="43"/>
    </location>
</feature>
<feature type="topological domain" description="Lumenal" evidence="3">
    <location>
        <begin position="44"/>
        <end position="331"/>
    </location>
</feature>
<feature type="glycosylation site" description="N-linked (GlcNAc...) asparagine" evidence="3">
    <location>
        <position position="72"/>
    </location>
</feature>
<feature type="glycosylation site" description="N-linked (GlcNAc...) asparagine" evidence="3">
    <location>
        <position position="154"/>
    </location>
</feature>
<feature type="glycosylation site" description="N-linked (GlcNAc...) asparagine" evidence="3">
    <location>
        <position position="198"/>
    </location>
</feature>
<feature type="glycosylation site" description="N-linked (GlcNAc...) asparagine" evidence="3">
    <location>
        <position position="212"/>
    </location>
</feature>
<feature type="glycosylation site" description="N-linked (GlcNAc...) asparagine" evidence="3">
    <location>
        <position position="326"/>
    </location>
</feature>
<reference key="1">
    <citation type="submission" date="2003-03" db="EMBL/GenBank/DDBJ databases">
        <authorList>
            <person name="Python P."/>
            <person name="Joerg H."/>
            <person name="Neuenschwander S."/>
            <person name="Stranzinger G."/>
            <person name="Voegeli P."/>
        </authorList>
    </citation>
    <scope>NUCLEOTIDE SEQUENCE [MRNA]</scope>
    <source>
        <tissue>Small intestine</tissue>
    </source>
</reference>
<sequence>MAPALPITLPSKMSLRSLKWSLLLLSLLSFLVMWYLSLPHYNVIERVNWMYFYEYEPIYRQDFHFTLREHSNCSHQNPFLVILVTSHPADVKARQAIRVTWGEKKSWWGYEVLTFFLLGQQAEREDKVLALSLEDEHLLYGDIIRQDFLDTYNNLTLKTIMAFRWVTEFCPNARYIMKTDTDVFINTGNLVKYLLNLNHSEKFFTGYPLIDNYSYRGFYQKTHISYQEYPFKVFPPYCSGLGYIMSRDLVPRIYEMMSHVKPIKFEDVYVGICLNLLKVDIHIPEDTNLFFLYRIHLDVCQLRRVIAAHGFSSKEIITFWQVMLRNTTCHY</sequence>
<dbReference type="EC" id="2.4.1.79" evidence="1"/>
<dbReference type="EMBL" id="AY253340">
    <property type="protein sequence ID" value="AAO92025.1"/>
    <property type="molecule type" value="mRNA"/>
</dbReference>
<dbReference type="RefSeq" id="NP_999516.1">
    <property type="nucleotide sequence ID" value="NM_214351.1"/>
</dbReference>
<dbReference type="RefSeq" id="XP_005652470.1">
    <property type="nucleotide sequence ID" value="XM_005652413.3"/>
</dbReference>
<dbReference type="RefSeq" id="XP_013848528.1">
    <property type="nucleotide sequence ID" value="XM_013993074.1"/>
</dbReference>
<dbReference type="RefSeq" id="XP_020924210.1">
    <property type="nucleotide sequence ID" value="XM_021068551.1"/>
</dbReference>
<dbReference type="RefSeq" id="XP_020924211.1">
    <property type="nucleotide sequence ID" value="XM_021068552.1"/>
</dbReference>
<dbReference type="RefSeq" id="XP_020924212.1">
    <property type="nucleotide sequence ID" value="XM_021068553.1"/>
</dbReference>
<dbReference type="RefSeq" id="XP_020924213.1">
    <property type="nucleotide sequence ID" value="XM_021068554.1"/>
</dbReference>
<dbReference type="RefSeq" id="XP_020924214.1">
    <property type="nucleotide sequence ID" value="XM_021068555.1"/>
</dbReference>
<dbReference type="RefSeq" id="XP_020924215.1">
    <property type="nucleotide sequence ID" value="XM_021068556.1"/>
</dbReference>
<dbReference type="RefSeq" id="XP_020924216.1">
    <property type="nucleotide sequence ID" value="XM_021068557.1"/>
</dbReference>
<dbReference type="RefSeq" id="XP_020924217.1">
    <property type="nucleotide sequence ID" value="XM_021068558.1"/>
</dbReference>
<dbReference type="RefSeq" id="XP_020924218.1">
    <property type="nucleotide sequence ID" value="XM_021068559.1"/>
</dbReference>
<dbReference type="RefSeq" id="XP_020924219.1">
    <property type="nucleotide sequence ID" value="XM_021068560.1"/>
</dbReference>
<dbReference type="RefSeq" id="XP_020924220.1">
    <property type="nucleotide sequence ID" value="XM_021068561.1"/>
</dbReference>
<dbReference type="RefSeq" id="XP_020924221.1">
    <property type="nucleotide sequence ID" value="XM_021068562.1"/>
</dbReference>
<dbReference type="SMR" id="Q864U6"/>
<dbReference type="FunCoup" id="Q864U6">
    <property type="interactions" value="98"/>
</dbReference>
<dbReference type="STRING" id="9823.ENSSSCP00000055915"/>
<dbReference type="CAZy" id="GT31">
    <property type="family name" value="Glycosyltransferase Family 31"/>
</dbReference>
<dbReference type="GlyCosmos" id="Q864U6">
    <property type="glycosylation" value="5 sites, No reported glycans"/>
</dbReference>
<dbReference type="GlyGen" id="Q864U6">
    <property type="glycosylation" value="5 sites"/>
</dbReference>
<dbReference type="PaxDb" id="9823-ENSSSCP00000023800"/>
<dbReference type="Ensembl" id="ENSSSCT00000026210.4">
    <property type="protein sequence ID" value="ENSSSCP00000023800.1"/>
    <property type="gene ID" value="ENSSSCG00000021774.4"/>
</dbReference>
<dbReference type="Ensembl" id="ENSSSCT00000037923.2">
    <property type="protein sequence ID" value="ENSSSCP00000056792.2"/>
    <property type="gene ID" value="ENSSSCG00000021774.4"/>
</dbReference>
<dbReference type="Ensembl" id="ENSSSCT00000046695.3">
    <property type="protein sequence ID" value="ENSSSCP00000035844.1"/>
    <property type="gene ID" value="ENSSSCG00000021774.4"/>
</dbReference>
<dbReference type="Ensembl" id="ENSSSCT00000051857.3">
    <property type="protein sequence ID" value="ENSSSCP00000039248.1"/>
    <property type="gene ID" value="ENSSSCG00000021774.4"/>
</dbReference>
<dbReference type="Ensembl" id="ENSSSCT00000061956.3">
    <property type="protein sequence ID" value="ENSSSCP00000055915.1"/>
    <property type="gene ID" value="ENSSSCG00000021774.4"/>
</dbReference>
<dbReference type="Ensembl" id="ENSSSCT00000075553.2">
    <property type="protein sequence ID" value="ENSSSCP00000061281.1"/>
    <property type="gene ID" value="ENSSSCG00000021774.4"/>
</dbReference>
<dbReference type="Ensembl" id="ENSSSCT00015079526.1">
    <property type="protein sequence ID" value="ENSSSCP00015032105.1"/>
    <property type="gene ID" value="ENSSSCG00015059568.1"/>
</dbReference>
<dbReference type="Ensembl" id="ENSSSCT00015079573.1">
    <property type="protein sequence ID" value="ENSSSCP00015032135.1"/>
    <property type="gene ID" value="ENSSSCG00015059568.1"/>
</dbReference>
<dbReference type="Ensembl" id="ENSSSCT00015079623.1">
    <property type="protein sequence ID" value="ENSSSCP00015032154.1"/>
    <property type="gene ID" value="ENSSSCG00015059568.1"/>
</dbReference>
<dbReference type="Ensembl" id="ENSSSCT00015079684.1">
    <property type="protein sequence ID" value="ENSSSCP00015032186.1"/>
    <property type="gene ID" value="ENSSSCG00015059568.1"/>
</dbReference>
<dbReference type="Ensembl" id="ENSSSCT00015079732.1">
    <property type="protein sequence ID" value="ENSSSCP00015032208.1"/>
    <property type="gene ID" value="ENSSSCG00015059568.1"/>
</dbReference>
<dbReference type="Ensembl" id="ENSSSCT00015079781.1">
    <property type="protein sequence ID" value="ENSSSCP00015032228.1"/>
    <property type="gene ID" value="ENSSSCG00015059568.1"/>
</dbReference>
<dbReference type="Ensembl" id="ENSSSCT00015079847.1">
    <property type="protein sequence ID" value="ENSSSCP00015032250.1"/>
    <property type="gene ID" value="ENSSSCG00015059568.1"/>
</dbReference>
<dbReference type="Ensembl" id="ENSSSCT00015079898.1">
    <property type="protein sequence ID" value="ENSSSCP00015032272.1"/>
    <property type="gene ID" value="ENSSSCG00015059568.1"/>
</dbReference>
<dbReference type="Ensembl" id="ENSSSCT00040085150.1">
    <property type="protein sequence ID" value="ENSSSCP00040037212.1"/>
    <property type="gene ID" value="ENSSSCG00040062493.1"/>
</dbReference>
<dbReference type="Ensembl" id="ENSSSCT00040085196.1">
    <property type="protein sequence ID" value="ENSSSCP00040037239.1"/>
    <property type="gene ID" value="ENSSSCG00040062493.1"/>
</dbReference>
<dbReference type="Ensembl" id="ENSSSCT00040085249.1">
    <property type="protein sequence ID" value="ENSSSCP00040037268.1"/>
    <property type="gene ID" value="ENSSSCG00040062493.1"/>
</dbReference>
<dbReference type="Ensembl" id="ENSSSCT00040085297.1">
    <property type="protein sequence ID" value="ENSSSCP00040037295.1"/>
    <property type="gene ID" value="ENSSSCG00040062493.1"/>
</dbReference>
<dbReference type="Ensembl" id="ENSSSCT00040085360.1">
    <property type="protein sequence ID" value="ENSSSCP00040037331.1"/>
    <property type="gene ID" value="ENSSSCG00040062493.1"/>
</dbReference>
<dbReference type="Ensembl" id="ENSSSCT00040085439.1">
    <property type="protein sequence ID" value="ENSSSCP00040037371.1"/>
    <property type="gene ID" value="ENSSSCG00040062493.1"/>
</dbReference>
<dbReference type="Ensembl" id="ENSSSCT00040085494.1">
    <property type="protein sequence ID" value="ENSSSCP00040037405.1"/>
    <property type="gene ID" value="ENSSSCG00040062493.1"/>
</dbReference>
<dbReference type="Ensembl" id="ENSSSCT00040085535.1">
    <property type="protein sequence ID" value="ENSSSCP00040037427.1"/>
    <property type="gene ID" value="ENSSSCG00040062493.1"/>
</dbReference>
<dbReference type="Ensembl" id="ENSSSCT00045007033.1">
    <property type="protein sequence ID" value="ENSSSCP00045004822.1"/>
    <property type="gene ID" value="ENSSSCG00045004222.1"/>
</dbReference>
<dbReference type="Ensembl" id="ENSSSCT00045007035.1">
    <property type="protein sequence ID" value="ENSSSCP00045004824.1"/>
    <property type="gene ID" value="ENSSSCG00045004222.1"/>
</dbReference>
<dbReference type="Ensembl" id="ENSSSCT00045007036.1">
    <property type="protein sequence ID" value="ENSSSCP00045004825.1"/>
    <property type="gene ID" value="ENSSSCG00045004222.1"/>
</dbReference>
<dbReference type="Ensembl" id="ENSSSCT00045007038.1">
    <property type="protein sequence ID" value="ENSSSCP00045004827.1"/>
    <property type="gene ID" value="ENSSSCG00045004222.1"/>
</dbReference>
<dbReference type="Ensembl" id="ENSSSCT00045007041.1">
    <property type="protein sequence ID" value="ENSSSCP00045004830.1"/>
    <property type="gene ID" value="ENSSSCG00045004222.1"/>
</dbReference>
<dbReference type="Ensembl" id="ENSSSCT00045007044.1">
    <property type="protein sequence ID" value="ENSSSCP00045004832.1"/>
    <property type="gene ID" value="ENSSSCG00045004222.1"/>
</dbReference>
<dbReference type="Ensembl" id="ENSSSCT00045007046.1">
    <property type="protein sequence ID" value="ENSSSCP00045004834.1"/>
    <property type="gene ID" value="ENSSSCG00045004222.1"/>
</dbReference>
<dbReference type="Ensembl" id="ENSSSCT00045007052.1">
    <property type="protein sequence ID" value="ENSSSCP00045004837.1"/>
    <property type="gene ID" value="ENSSSCG00045004222.1"/>
</dbReference>
<dbReference type="Ensembl" id="ENSSSCT00065068420.1">
    <property type="protein sequence ID" value="ENSSSCP00065029788.1"/>
    <property type="gene ID" value="ENSSSCG00065049965.1"/>
</dbReference>
<dbReference type="Ensembl" id="ENSSSCT00065068424.1">
    <property type="protein sequence ID" value="ENSSSCP00065029791.1"/>
    <property type="gene ID" value="ENSSSCG00065049965.1"/>
</dbReference>
<dbReference type="Ensembl" id="ENSSSCT00065068427.1">
    <property type="protein sequence ID" value="ENSSSCP00065029794.1"/>
    <property type="gene ID" value="ENSSSCG00065049965.1"/>
</dbReference>
<dbReference type="Ensembl" id="ENSSSCT00065068428.1">
    <property type="protein sequence ID" value="ENSSSCP00065029795.1"/>
    <property type="gene ID" value="ENSSSCG00065049965.1"/>
</dbReference>
<dbReference type="Ensembl" id="ENSSSCT00065068430.1">
    <property type="protein sequence ID" value="ENSSSCP00065029796.1"/>
    <property type="gene ID" value="ENSSSCG00065049965.1"/>
</dbReference>
<dbReference type="Ensembl" id="ENSSSCT00065068433.1">
    <property type="protein sequence ID" value="ENSSSCP00065029797.1"/>
    <property type="gene ID" value="ENSSSCG00065049965.1"/>
</dbReference>
<dbReference type="Ensembl" id="ENSSSCT00065068439.1">
    <property type="protein sequence ID" value="ENSSSCP00065029801.1"/>
    <property type="gene ID" value="ENSSSCG00065049965.1"/>
</dbReference>
<dbReference type="Ensembl" id="ENSSSCT00065068444.1">
    <property type="protein sequence ID" value="ENSSSCP00065029802.1"/>
    <property type="gene ID" value="ENSSSCG00065049965.1"/>
</dbReference>
<dbReference type="Ensembl" id="ENSSSCT00070048129.1">
    <property type="protein sequence ID" value="ENSSSCP00070040624.1"/>
    <property type="gene ID" value="ENSSSCG00070024100.1"/>
</dbReference>
<dbReference type="Ensembl" id="ENSSSCT00070048130.1">
    <property type="protein sequence ID" value="ENSSSCP00070040625.1"/>
    <property type="gene ID" value="ENSSSCG00070024100.1"/>
</dbReference>
<dbReference type="Ensembl" id="ENSSSCT00070048134.1">
    <property type="protein sequence ID" value="ENSSSCP00070040629.1"/>
    <property type="gene ID" value="ENSSSCG00070024100.1"/>
</dbReference>
<dbReference type="Ensembl" id="ENSSSCT00085042754">
    <property type="protein sequence ID" value="ENSSSCP00085030072"/>
    <property type="gene ID" value="ENSSSCG00085022275"/>
</dbReference>
<dbReference type="Ensembl" id="ENSSSCT00085042763">
    <property type="protein sequence ID" value="ENSSSCP00085030079"/>
    <property type="gene ID" value="ENSSSCG00085022275"/>
</dbReference>
<dbReference type="Ensembl" id="ENSSSCT00085042773">
    <property type="protein sequence ID" value="ENSSSCP00085030084"/>
    <property type="gene ID" value="ENSSSCG00085022275"/>
</dbReference>
<dbReference type="Ensembl" id="ENSSSCT00085042777">
    <property type="protein sequence ID" value="ENSSSCP00085030086"/>
    <property type="gene ID" value="ENSSSCG00085022275"/>
</dbReference>
<dbReference type="Ensembl" id="ENSSSCT00085042784">
    <property type="protein sequence ID" value="ENSSSCP00085030090"/>
    <property type="gene ID" value="ENSSSCG00085022275"/>
</dbReference>
<dbReference type="Ensembl" id="ENSSSCT00085042790">
    <property type="protein sequence ID" value="ENSSSCP00085030093"/>
    <property type="gene ID" value="ENSSSCG00085022275"/>
</dbReference>
<dbReference type="Ensembl" id="ENSSSCT00085042795">
    <property type="protein sequence ID" value="ENSSSCP00085030097"/>
    <property type="gene ID" value="ENSSSCG00085022275"/>
</dbReference>
<dbReference type="Ensembl" id="ENSSSCT00085042809">
    <property type="protein sequence ID" value="ENSSSCP00085030102"/>
    <property type="gene ID" value="ENSSSCG00085022275"/>
</dbReference>
<dbReference type="Ensembl" id="ENSSSCT00085042816">
    <property type="protein sequence ID" value="ENSSSCP00085030106"/>
    <property type="gene ID" value="ENSSSCG00085022275"/>
</dbReference>
<dbReference type="Ensembl" id="ENSSSCT00085042823">
    <property type="protein sequence ID" value="ENSSSCP00085030111"/>
    <property type="gene ID" value="ENSSSCG00085022275"/>
</dbReference>
<dbReference type="Ensembl" id="ENSSSCT00090043223">
    <property type="protein sequence ID" value="ENSSSCP00090027096"/>
    <property type="gene ID" value="ENSSSCG00090024334"/>
</dbReference>
<dbReference type="Ensembl" id="ENSSSCT00090043229">
    <property type="protein sequence ID" value="ENSSSCP00090027101"/>
    <property type="gene ID" value="ENSSSCG00090024334"/>
</dbReference>
<dbReference type="Ensembl" id="ENSSSCT00090043237">
    <property type="protein sequence ID" value="ENSSSCP00090027108"/>
    <property type="gene ID" value="ENSSSCG00090024334"/>
</dbReference>
<dbReference type="Ensembl" id="ENSSSCT00090043250">
    <property type="protein sequence ID" value="ENSSSCP00090027119"/>
    <property type="gene ID" value="ENSSSCG00090024334"/>
</dbReference>
<dbReference type="Ensembl" id="ENSSSCT00090043265">
    <property type="protein sequence ID" value="ENSSSCP00090027127"/>
    <property type="gene ID" value="ENSSSCG00090024334"/>
</dbReference>
<dbReference type="Ensembl" id="ENSSSCT00090043268">
    <property type="protein sequence ID" value="ENSSSCP00090027129"/>
    <property type="gene ID" value="ENSSSCG00090024334"/>
</dbReference>
<dbReference type="Ensembl" id="ENSSSCT00090043274">
    <property type="protein sequence ID" value="ENSSSCP00090027133"/>
    <property type="gene ID" value="ENSSSCG00090024334"/>
</dbReference>
<dbReference type="Ensembl" id="ENSSSCT00090043284">
    <property type="protein sequence ID" value="ENSSSCP00090027137"/>
    <property type="gene ID" value="ENSSSCG00090024334"/>
</dbReference>
<dbReference type="Ensembl" id="ENSSSCT00090043291">
    <property type="protein sequence ID" value="ENSSSCP00090027139"/>
    <property type="gene ID" value="ENSSSCG00090024334"/>
</dbReference>
<dbReference type="Ensembl" id="ENSSSCT00090043300">
    <property type="protein sequence ID" value="ENSSSCP00090027144"/>
    <property type="gene ID" value="ENSSSCG00090024334"/>
</dbReference>
<dbReference type="Ensembl" id="ENSSSCT00105002999">
    <property type="protein sequence ID" value="ENSSSCP00105002248"/>
    <property type="gene ID" value="ENSSSCG00105001551"/>
</dbReference>
<dbReference type="Ensembl" id="ENSSSCT00105003011">
    <property type="protein sequence ID" value="ENSSSCP00105002256"/>
    <property type="gene ID" value="ENSSSCG00105001551"/>
</dbReference>
<dbReference type="Ensembl" id="ENSSSCT00105003019">
    <property type="protein sequence ID" value="ENSSSCP00105002263"/>
    <property type="gene ID" value="ENSSSCG00105001551"/>
</dbReference>
<dbReference type="Ensembl" id="ENSSSCT00105003024">
    <property type="protein sequence ID" value="ENSSSCP00105002267"/>
    <property type="gene ID" value="ENSSSCG00105001551"/>
</dbReference>
<dbReference type="Ensembl" id="ENSSSCT00105003028">
    <property type="protein sequence ID" value="ENSSSCP00105002270"/>
    <property type="gene ID" value="ENSSSCG00105001551"/>
</dbReference>
<dbReference type="Ensembl" id="ENSSSCT00105003036">
    <property type="protein sequence ID" value="ENSSSCP00105002276"/>
    <property type="gene ID" value="ENSSSCG00105001551"/>
</dbReference>
<dbReference type="Ensembl" id="ENSSSCT00105003039">
    <property type="protein sequence ID" value="ENSSSCP00105002278"/>
    <property type="gene ID" value="ENSSSCG00105001551"/>
</dbReference>
<dbReference type="Ensembl" id="ENSSSCT00105003050">
    <property type="protein sequence ID" value="ENSSSCP00105002287"/>
    <property type="gene ID" value="ENSSSCG00105001551"/>
</dbReference>
<dbReference type="Ensembl" id="ENSSSCT00105003057">
    <property type="protein sequence ID" value="ENSSSCP00105002294"/>
    <property type="gene ID" value="ENSSSCG00105001551"/>
</dbReference>
<dbReference type="Ensembl" id="ENSSSCT00105003059">
    <property type="protein sequence ID" value="ENSSSCP00105002297"/>
    <property type="gene ID" value="ENSSSCG00105001551"/>
</dbReference>
<dbReference type="Ensembl" id="ENSSSCT00110000965">
    <property type="protein sequence ID" value="ENSSSCP00110000754"/>
    <property type="gene ID" value="ENSSSCG00110000502"/>
</dbReference>
<dbReference type="Ensembl" id="ENSSSCT00110000969">
    <property type="protein sequence ID" value="ENSSSCP00110000757"/>
    <property type="gene ID" value="ENSSSCG00110000502"/>
</dbReference>
<dbReference type="Ensembl" id="ENSSSCT00110000973">
    <property type="protein sequence ID" value="ENSSSCP00110000759"/>
    <property type="gene ID" value="ENSSSCG00110000502"/>
</dbReference>
<dbReference type="Ensembl" id="ENSSSCT00110000976">
    <property type="protein sequence ID" value="ENSSSCP00110000762"/>
    <property type="gene ID" value="ENSSSCG00110000502"/>
</dbReference>
<dbReference type="Ensembl" id="ENSSSCT00110000979">
    <property type="protein sequence ID" value="ENSSSCP00110000765"/>
    <property type="gene ID" value="ENSSSCG00110000502"/>
</dbReference>
<dbReference type="Ensembl" id="ENSSSCT00110000990">
    <property type="protein sequence ID" value="ENSSSCP00110000772"/>
    <property type="gene ID" value="ENSSSCG00110000502"/>
</dbReference>
<dbReference type="Ensembl" id="ENSSSCT00110000993">
    <property type="protein sequence ID" value="ENSSSCP00110000774"/>
    <property type="gene ID" value="ENSSSCG00110000502"/>
</dbReference>
<dbReference type="Ensembl" id="ENSSSCT00110000998">
    <property type="protein sequence ID" value="ENSSSCP00110000777"/>
    <property type="gene ID" value="ENSSSCG00110000502"/>
</dbReference>
<dbReference type="Ensembl" id="ENSSSCT00110001002">
    <property type="protein sequence ID" value="ENSSSCP00110000780"/>
    <property type="gene ID" value="ENSSSCG00110000502"/>
</dbReference>
<dbReference type="Ensembl" id="ENSSSCT00110001004">
    <property type="protein sequence ID" value="ENSSSCP00110000781"/>
    <property type="gene ID" value="ENSSSCG00110000502"/>
</dbReference>
<dbReference type="Ensembl" id="ENSSSCT00130062736">
    <property type="protein sequence ID" value="ENSSSCP00130044952"/>
    <property type="gene ID" value="ENSSSCG00130032146"/>
</dbReference>
<dbReference type="Ensembl" id="ENSSSCT00130062745">
    <property type="protein sequence ID" value="ENSSSCP00130044958"/>
    <property type="gene ID" value="ENSSSCG00130032146"/>
</dbReference>
<dbReference type="Ensembl" id="ENSSSCT00130062759">
    <property type="protein sequence ID" value="ENSSSCP00130044968"/>
    <property type="gene ID" value="ENSSSCG00130032146"/>
</dbReference>
<dbReference type="Ensembl" id="ENSSSCT00130062771">
    <property type="protein sequence ID" value="ENSSSCP00130044977"/>
    <property type="gene ID" value="ENSSSCG00130032146"/>
</dbReference>
<dbReference type="Ensembl" id="ENSSSCT00130062780">
    <property type="protein sequence ID" value="ENSSSCP00130044983"/>
    <property type="gene ID" value="ENSSSCG00130032146"/>
</dbReference>
<dbReference type="Ensembl" id="ENSSSCT00130062793">
    <property type="protein sequence ID" value="ENSSSCP00130044990"/>
    <property type="gene ID" value="ENSSSCG00130032146"/>
</dbReference>
<dbReference type="Ensembl" id="ENSSSCT00130062802">
    <property type="protein sequence ID" value="ENSSSCP00130044998"/>
    <property type="gene ID" value="ENSSSCG00130032146"/>
</dbReference>
<dbReference type="Ensembl" id="ENSSSCT00130062814">
    <property type="protein sequence ID" value="ENSSSCP00130045006"/>
    <property type="gene ID" value="ENSSSCG00130032146"/>
</dbReference>
<dbReference type="Ensembl" id="ENSSSCT00130062820">
    <property type="protein sequence ID" value="ENSSSCP00130045009"/>
    <property type="gene ID" value="ENSSSCG00130032146"/>
</dbReference>
<dbReference type="Ensembl" id="ENSSSCT00130062827">
    <property type="protein sequence ID" value="ENSSSCP00130045014"/>
    <property type="gene ID" value="ENSSSCG00130032146"/>
</dbReference>
<dbReference type="GeneID" id="397634"/>
<dbReference type="KEGG" id="ssc:397634"/>
<dbReference type="CTD" id="8706"/>
<dbReference type="VGNC" id="VGNC:108632">
    <property type="gene designation" value="B3GALNT1"/>
</dbReference>
<dbReference type="eggNOG" id="KOG2287">
    <property type="taxonomic scope" value="Eukaryota"/>
</dbReference>
<dbReference type="GeneTree" id="ENSGT00940000162252"/>
<dbReference type="HOGENOM" id="CLU_036849_2_4_1"/>
<dbReference type="InParanoid" id="Q864U6"/>
<dbReference type="OMA" id="DICKYRH"/>
<dbReference type="OrthoDB" id="5957813at2759"/>
<dbReference type="TreeFam" id="TF318639"/>
<dbReference type="Reactome" id="R-SSC-9840309">
    <property type="pathway name" value="Glycosphingolipid biosynthesis"/>
</dbReference>
<dbReference type="UniPathway" id="UPA00378"/>
<dbReference type="Proteomes" id="UP000008227">
    <property type="component" value="Chromosome 13"/>
</dbReference>
<dbReference type="Proteomes" id="UP000314985">
    <property type="component" value="Chromosome 13"/>
</dbReference>
<dbReference type="Proteomes" id="UP000694570">
    <property type="component" value="Unplaced"/>
</dbReference>
<dbReference type="Proteomes" id="UP000694571">
    <property type="component" value="Unplaced"/>
</dbReference>
<dbReference type="Proteomes" id="UP000694720">
    <property type="component" value="Unplaced"/>
</dbReference>
<dbReference type="Proteomes" id="UP000694722">
    <property type="component" value="Unplaced"/>
</dbReference>
<dbReference type="Proteomes" id="UP000694723">
    <property type="component" value="Unplaced"/>
</dbReference>
<dbReference type="Proteomes" id="UP000694724">
    <property type="component" value="Unplaced"/>
</dbReference>
<dbReference type="Proteomes" id="UP000694725">
    <property type="component" value="Unplaced"/>
</dbReference>
<dbReference type="Proteomes" id="UP000694726">
    <property type="component" value="Unplaced"/>
</dbReference>
<dbReference type="Proteomes" id="UP000694727">
    <property type="component" value="Unplaced"/>
</dbReference>
<dbReference type="Proteomes" id="UP000694728">
    <property type="component" value="Unplaced"/>
</dbReference>
<dbReference type="Bgee" id="ENSSSCG00000021774">
    <property type="expression patterns" value="Expressed in Ammon's horn and 45 other cell types or tissues"/>
</dbReference>
<dbReference type="ExpressionAtlas" id="Q864U6">
    <property type="expression patterns" value="baseline and differential"/>
</dbReference>
<dbReference type="GO" id="GO:0000139">
    <property type="term" value="C:Golgi membrane"/>
    <property type="evidence" value="ECO:0000318"/>
    <property type="project" value="GO_Central"/>
</dbReference>
<dbReference type="GO" id="GO:0047273">
    <property type="term" value="F:galactosylgalactosylglucosylceramide beta-D-acetylgalactosaminyltransferase activity"/>
    <property type="evidence" value="ECO:0007669"/>
    <property type="project" value="UniProtKB-EC"/>
</dbReference>
<dbReference type="GO" id="GO:0008499">
    <property type="term" value="F:N-acetyl-beta-D-glucosaminide beta-(1,3)-galactosyltransferase activity"/>
    <property type="evidence" value="ECO:0000318"/>
    <property type="project" value="GO_Central"/>
</dbReference>
<dbReference type="GO" id="GO:0006629">
    <property type="term" value="P:lipid metabolic process"/>
    <property type="evidence" value="ECO:0007669"/>
    <property type="project" value="UniProtKB-KW"/>
</dbReference>
<dbReference type="GO" id="GO:0009312">
    <property type="term" value="P:oligosaccharide biosynthetic process"/>
    <property type="evidence" value="ECO:0007669"/>
    <property type="project" value="Ensembl"/>
</dbReference>
<dbReference type="GO" id="GO:0006493">
    <property type="term" value="P:protein O-linked glycosylation"/>
    <property type="evidence" value="ECO:0000318"/>
    <property type="project" value="GO_Central"/>
</dbReference>
<dbReference type="FunFam" id="3.90.550.50:FF:000001">
    <property type="entry name" value="Hexosyltransferase"/>
    <property type="match status" value="1"/>
</dbReference>
<dbReference type="Gene3D" id="3.90.550.50">
    <property type="match status" value="1"/>
</dbReference>
<dbReference type="InterPro" id="IPR002659">
    <property type="entry name" value="Glyco_trans_31"/>
</dbReference>
<dbReference type="PANTHER" id="PTHR11214">
    <property type="entry name" value="BETA-1,3-N-ACETYLGLUCOSAMINYLTRANSFERASE"/>
    <property type="match status" value="1"/>
</dbReference>
<dbReference type="PANTHER" id="PTHR11214:SF153">
    <property type="entry name" value="UDP-GALNAC:BETA-1,3-N-ACETYLGALACTOSAMINYLTRANSFERASE 1"/>
    <property type="match status" value="1"/>
</dbReference>
<dbReference type="Pfam" id="PF01762">
    <property type="entry name" value="Galactosyl_T"/>
    <property type="match status" value="1"/>
</dbReference>
<comment type="function">
    <text evidence="1 2">Transfers N-acetylgalactosamine onto globotriaosylceramide. Plays a critical role in preimplantation stage embryonic development.</text>
</comment>
<comment type="catalytic activity">
    <reaction evidence="1">
        <text>a globoside Gb3Cer (d18:1(4E)) + UDP-N-acetyl-alpha-D-galactosamine = a globoside Gb4Cer (d18:1(4E)) + UDP + H(+)</text>
        <dbReference type="Rhea" id="RHEA:22252"/>
        <dbReference type="ChEBI" id="CHEBI:15378"/>
        <dbReference type="ChEBI" id="CHEBI:18259"/>
        <dbReference type="ChEBI" id="CHEBI:18313"/>
        <dbReference type="ChEBI" id="CHEBI:58223"/>
        <dbReference type="ChEBI" id="CHEBI:67138"/>
        <dbReference type="EC" id="2.4.1.79"/>
    </reaction>
    <physiologicalReaction direction="left-to-right" evidence="1">
        <dbReference type="Rhea" id="RHEA:22253"/>
    </physiologicalReaction>
</comment>
<comment type="cofactor">
    <cofactor evidence="1">
        <name>Mg(2+)</name>
        <dbReference type="ChEBI" id="CHEBI:18420"/>
    </cofactor>
</comment>
<comment type="pathway">
    <text>Protein modification; protein glycosylation.</text>
</comment>
<comment type="subcellular location">
    <subcellularLocation>
        <location evidence="1">Golgi apparatus membrane</location>
        <topology evidence="1">Single-pass type II membrane protein</topology>
    </subcellularLocation>
</comment>
<comment type="similarity">
    <text evidence="4">Belongs to the glycosyltransferase 31 family.</text>
</comment>
<accession>Q864U6</accession>
<organism>
    <name type="scientific">Sus scrofa</name>
    <name type="common">Pig</name>
    <dbReference type="NCBI Taxonomy" id="9823"/>
    <lineage>
        <taxon>Eukaryota</taxon>
        <taxon>Metazoa</taxon>
        <taxon>Chordata</taxon>
        <taxon>Craniata</taxon>
        <taxon>Vertebrata</taxon>
        <taxon>Euteleostomi</taxon>
        <taxon>Mammalia</taxon>
        <taxon>Eutheria</taxon>
        <taxon>Laurasiatheria</taxon>
        <taxon>Artiodactyla</taxon>
        <taxon>Suina</taxon>
        <taxon>Suidae</taxon>
        <taxon>Sus</taxon>
    </lineage>
</organism>